<reference key="1">
    <citation type="journal article" date="1997" name="Nature">
        <title>The complete genome sequence of the gastric pathogen Helicobacter pylori.</title>
        <authorList>
            <person name="Tomb J.-F."/>
            <person name="White O."/>
            <person name="Kerlavage A.R."/>
            <person name="Clayton R.A."/>
            <person name="Sutton G.G."/>
            <person name="Fleischmann R.D."/>
            <person name="Ketchum K.A."/>
            <person name="Klenk H.-P."/>
            <person name="Gill S.R."/>
            <person name="Dougherty B.A."/>
            <person name="Nelson K.E."/>
            <person name="Quackenbush J."/>
            <person name="Zhou L."/>
            <person name="Kirkness E.F."/>
            <person name="Peterson S.N."/>
            <person name="Loftus B.J."/>
            <person name="Richardson D.L."/>
            <person name="Dodson R.J."/>
            <person name="Khalak H.G."/>
            <person name="Glodek A."/>
            <person name="McKenney K."/>
            <person name="FitzGerald L.M."/>
            <person name="Lee N."/>
            <person name="Adams M.D."/>
            <person name="Hickey E.K."/>
            <person name="Berg D.E."/>
            <person name="Gocayne J.D."/>
            <person name="Utterback T.R."/>
            <person name="Peterson J.D."/>
            <person name="Kelley J.M."/>
            <person name="Cotton M.D."/>
            <person name="Weidman J.F."/>
            <person name="Fujii C."/>
            <person name="Bowman C."/>
            <person name="Watthey L."/>
            <person name="Wallin E."/>
            <person name="Hayes W.S."/>
            <person name="Borodovsky M."/>
            <person name="Karp P.D."/>
            <person name="Smith H.O."/>
            <person name="Fraser C.M."/>
            <person name="Venter J.C."/>
        </authorList>
    </citation>
    <scope>NUCLEOTIDE SEQUENCE [LARGE SCALE GENOMIC DNA]</scope>
    <source>
        <strain>ATCC 700392 / 26695</strain>
    </source>
</reference>
<dbReference type="EMBL" id="AE000511">
    <property type="protein sequence ID" value="AAD07935.1"/>
    <property type="molecule type" value="Genomic_DNA"/>
</dbReference>
<dbReference type="PIR" id="G64630">
    <property type="entry name" value="G64630"/>
</dbReference>
<dbReference type="RefSeq" id="NP_207680.1">
    <property type="nucleotide sequence ID" value="NC_000915.1"/>
</dbReference>
<dbReference type="SMR" id="P55981"/>
<dbReference type="DIP" id="DIP-3244N"/>
<dbReference type="IntAct" id="P55981">
    <property type="interactions" value="16"/>
</dbReference>
<dbReference type="MINT" id="P55981"/>
<dbReference type="STRING" id="85962.HP_0887"/>
<dbReference type="TCDB" id="1.C.9.1.1">
    <property type="family name" value="the vacuolating cytotoxin (vaca) family"/>
</dbReference>
<dbReference type="ABCD" id="P55981">
    <property type="antibodies" value="6 sequenced antibodies"/>
</dbReference>
<dbReference type="EnsemblBacteria" id="AAD07935">
    <property type="protein sequence ID" value="AAD07935"/>
    <property type="gene ID" value="HP_0887"/>
</dbReference>
<dbReference type="KEGG" id="hpy:HP_0887"/>
<dbReference type="PATRIC" id="fig|85962.8.peg.919"/>
<dbReference type="InParanoid" id="P55981"/>
<dbReference type="OrthoDB" id="5313293at2"/>
<dbReference type="PhylomeDB" id="P55981"/>
<dbReference type="Proteomes" id="UP000000429">
    <property type="component" value="Chromosome"/>
</dbReference>
<dbReference type="GO" id="GO:0009279">
    <property type="term" value="C:cell outer membrane"/>
    <property type="evidence" value="ECO:0007669"/>
    <property type="project" value="UniProtKB-SubCell"/>
</dbReference>
<dbReference type="GO" id="GO:0009986">
    <property type="term" value="C:cell surface"/>
    <property type="evidence" value="ECO:0007669"/>
    <property type="project" value="UniProtKB-SubCell"/>
</dbReference>
<dbReference type="GO" id="GO:0005576">
    <property type="term" value="C:extracellular region"/>
    <property type="evidence" value="ECO:0007669"/>
    <property type="project" value="UniProtKB-SubCell"/>
</dbReference>
<dbReference type="GO" id="GO:0042597">
    <property type="term" value="C:periplasmic space"/>
    <property type="evidence" value="ECO:0007669"/>
    <property type="project" value="UniProtKB-SubCell"/>
</dbReference>
<dbReference type="GO" id="GO:0090729">
    <property type="term" value="F:toxin activity"/>
    <property type="evidence" value="ECO:0007669"/>
    <property type="project" value="UniProtKB-KW"/>
</dbReference>
<dbReference type="Gene3D" id="2.40.128.130">
    <property type="entry name" value="Autotransporter beta-domain"/>
    <property type="match status" value="1"/>
</dbReference>
<dbReference type="InterPro" id="IPR005546">
    <property type="entry name" value="Autotransporte_beta"/>
</dbReference>
<dbReference type="InterPro" id="IPR036709">
    <property type="entry name" value="Autotransporte_beta_dom_sf"/>
</dbReference>
<dbReference type="InterPro" id="IPR003842">
    <property type="entry name" value="Vacuolating_cytotoxin"/>
</dbReference>
<dbReference type="Pfam" id="PF03797">
    <property type="entry name" value="Autotransporter"/>
    <property type="match status" value="1"/>
</dbReference>
<dbReference type="Pfam" id="PF02691">
    <property type="entry name" value="VacA"/>
    <property type="match status" value="1"/>
</dbReference>
<dbReference type="PRINTS" id="PR01656">
    <property type="entry name" value="VACCYTOTOXIN"/>
</dbReference>
<dbReference type="SMART" id="SM00869">
    <property type="entry name" value="Autotransporter"/>
    <property type="match status" value="1"/>
</dbReference>
<dbReference type="SUPFAM" id="SSF103515">
    <property type="entry name" value="Autotransporter"/>
    <property type="match status" value="1"/>
</dbReference>
<dbReference type="PROSITE" id="PS51208">
    <property type="entry name" value="AUTOTRANSPORTER"/>
    <property type="match status" value="1"/>
</dbReference>
<gene>
    <name type="primary">vacA</name>
    <name type="ordered locus">HP_0887</name>
</gene>
<name>VACA_HELPY</name>
<comment type="function">
    <text>Induces vacuolation of eukaryotic cells. Causes ulceration and gastric lesions.</text>
</comment>
<comment type="subcellular location">
    <molecule>Vacuolating cytotoxin autotransporter</molecule>
    <subcellularLocation>
        <location evidence="1">Periplasm</location>
    </subcellularLocation>
</comment>
<comment type="subcellular location">
    <molecule>Vacuolating cytotoxin</molecule>
    <subcellularLocation>
        <location>Secreted</location>
    </subcellularLocation>
    <subcellularLocation>
        <location>Cell surface</location>
    </subcellularLocation>
</comment>
<comment type="subcellular location">
    <molecule>Vacuolating cytotoxin translocator</molecule>
    <subcellularLocation>
        <location evidence="1">Cell outer membrane</location>
        <topology evidence="1">Multi-pass membrane protein</topology>
    </subcellularLocation>
    <text evidence="1">The cleaved C-terminal fragment (autotransporter domain) is localized in the outer membrane.</text>
</comment>
<comment type="domain">
    <text evidence="1">The signal peptide, cleaved at the inner membrane, guides the autotransporter protein to the periplasmic space. Then, insertion of the C-terminal translocator domain in the outer membrane forms a hydrophilic pore for the translocation of the passenger domain to the bacterial cell surface, with subsequent cleavage (By similarity).</text>
</comment>
<sequence length="1290" mass="139312">MEIQQTHRKINRPLVSLALVGALVSITPQQSHAAFFTTVIIPAIVGGIATGAAVGTVSGLLGWGLKQAEEANKTPDKPDKVWRIQAGKGFNEFPNKEYDLYRSLLSSKIDGGWDWGNAATHYWVKGGQWNKLEVDMKDAVGTYNLSGLRNFTGGDLDVNMQKATLRLGQFNGNSFTSYKDSADRTTRVDFNAKNILIDNFLEINNRVGSGAGRKASSTVLTLQASEGITSSKNAEISLYDGATLNLASNSVKLMGNVWMGRLQYVGAYLAPSYSTINTSKVTGEVNFNHLTVGDHNAAQAGIIASNKTHIGTLDLWQSAGLNIIAPPEGGYKDKPKDKPSNTTQNNANNNQQNSAQNNSNTQVINPPNSAQKTEIQPTQVIDGPFAGGKDTVVNIDRINTNADGTIKVGGYKASLTTNAAHLHIGKGGINLSNQASGRTLLVENLTGNITVDGPLRVNNQVGGYALAGSSANFEFKAGTDTKNGTATFNNDISLGRFVNLKVDAHTANFKGIDTGNGGFNTLDFSGVTGKVNINKLITASTNVAVKNFNINELVVKTNGVSVGEYTHFSEDIGSQSRINTVRLETGTRSIFSGGVKFKSGEKLVIDEFYYSPWNYFDARNIKNVEITRKFASSTPENPWGTSKLMFNNLTLGQNAVMDYSQFSNLTIQGDFINNQGTINYLVRGGQVATLNVGNAAAMFFSNNVDSATGFYQPLMKINSAQDLIKNKEHVLLKAKIIGYGNVSLGTNSISNVNLIEQFKERLALYNNNNRMDICVVRNTDDIKACGTAIGNQSMVNNPDNYKYLIGKAWKNIGISKTANGSKISVYYLGNSTPTEKGGNTTNLPTNTTSNVRSANNALAQNAPFAQPSATPNLVAINQHDFGTIESVFELANRSKDIDTLYANSGAQGRDLLQTLLIDSHDAGYARQMIDNTSTGEITKQLNAATTTLNNIASLEHKTSSLQTLSLSNAMILNSRLVNLSRRHTNNIDSFAQRLQALKDQKFASLESAAEVLYQFAPKYEKPTNVWANAIGGTSLNNGGNASLYGTSAGVDAYLNGEVEAIVGGFGSYGYSSFNNQANSLNSGANNTNFGVYSRIFANQHEFDFEAQGALGSDQSSLNFKSALLRDLNQSYNYLAYSAATRASYGYDFAFFRNALVLKPSVGVSYNHLGSTNFKSNSNQVALKNGSSSQHLFNASANVEARYYYGDTSYFYMNAGVLQEFANFGSSNAVSLNTFKVNAAHNPLSTHARVMMGGELKLAKEVFLNLGFVYLHNLISNIGHFASNLGMRYSF</sequence>
<protein>
    <recommendedName>
        <fullName>Vacuolating cytotoxin autotransporter</fullName>
    </recommendedName>
    <component>
        <recommendedName>
            <fullName>Vacuolating cytotoxin</fullName>
        </recommendedName>
    </component>
    <component>
        <recommendedName>
            <fullName>Vacuolating cytotoxin translocator</fullName>
        </recommendedName>
    </component>
</protein>
<feature type="signal peptide" evidence="2">
    <location>
        <begin position="1"/>
        <end position="33"/>
    </location>
</feature>
<feature type="chain" id="PRO_0000387586" description="Vacuolating cytotoxin autotransporter">
    <location>
        <begin position="34"/>
        <end position="1290"/>
    </location>
</feature>
<feature type="chain" id="PRO_0000022651" description="Vacuolating cytotoxin">
    <location>
        <begin position="34"/>
        <end status="unknown"/>
    </location>
</feature>
<feature type="chain" id="PRO_0000022652" description="Vacuolating cytotoxin translocator" evidence="2">
    <location>
        <begin status="unknown"/>
        <end position="1290"/>
    </location>
</feature>
<feature type="domain" description="Autotransporter" evidence="3">
    <location>
        <begin position="1018"/>
        <end position="1290"/>
    </location>
</feature>
<feature type="region of interest" description="Disordered" evidence="4">
    <location>
        <begin position="326"/>
        <end position="374"/>
    </location>
</feature>
<feature type="compositionally biased region" description="Basic and acidic residues" evidence="4">
    <location>
        <begin position="330"/>
        <end position="339"/>
    </location>
</feature>
<feature type="compositionally biased region" description="Low complexity" evidence="4">
    <location>
        <begin position="340"/>
        <end position="362"/>
    </location>
</feature>
<feature type="compositionally biased region" description="Polar residues" evidence="4">
    <location>
        <begin position="363"/>
        <end position="374"/>
    </location>
</feature>
<keyword id="KW-0998">Cell outer membrane</keyword>
<keyword id="KW-0472">Membrane</keyword>
<keyword id="KW-0574">Periplasm</keyword>
<keyword id="KW-1185">Reference proteome</keyword>
<keyword id="KW-0964">Secreted</keyword>
<keyword id="KW-0732">Signal</keyword>
<keyword id="KW-0800">Toxin</keyword>
<keyword id="KW-0812">Transmembrane</keyword>
<keyword id="KW-1134">Transmembrane beta strand</keyword>
<keyword id="KW-0843">Virulence</keyword>
<evidence type="ECO:0000250" key="1"/>
<evidence type="ECO:0000255" key="2"/>
<evidence type="ECO:0000255" key="3">
    <source>
        <dbReference type="PROSITE-ProRule" id="PRU00556"/>
    </source>
</evidence>
<evidence type="ECO:0000256" key="4">
    <source>
        <dbReference type="SAM" id="MobiDB-lite"/>
    </source>
</evidence>
<accession>P55981</accession>
<proteinExistence type="inferred from homology"/>
<organism>
    <name type="scientific">Helicobacter pylori (strain ATCC 700392 / 26695)</name>
    <name type="common">Campylobacter pylori</name>
    <dbReference type="NCBI Taxonomy" id="85962"/>
    <lineage>
        <taxon>Bacteria</taxon>
        <taxon>Pseudomonadati</taxon>
        <taxon>Campylobacterota</taxon>
        <taxon>Epsilonproteobacteria</taxon>
        <taxon>Campylobacterales</taxon>
        <taxon>Helicobacteraceae</taxon>
        <taxon>Helicobacter</taxon>
    </lineage>
</organism>